<protein>
    <recommendedName>
        <fullName>Acidic phospholipase A2 1</fullName>
        <shortName>svPLA2</shortName>
        <ecNumber>3.1.1.4</ecNumber>
    </recommendedName>
    <alternativeName>
        <fullName>Phosphatidylcholine 2-acylhydrolase</fullName>
    </alternativeName>
    <alternativeName>
        <fullName>Phospholipase A2 isozyme I</fullName>
    </alternativeName>
    <alternativeName>
        <fullName>pgPLA 1a/pgPLA 2a</fullName>
    </alternativeName>
</protein>
<dbReference type="EC" id="3.1.1.4"/>
<dbReference type="EMBL" id="D10070">
    <property type="protein sequence ID" value="BAA00962.1"/>
    <property type="molecule type" value="mRNA"/>
</dbReference>
<dbReference type="EMBL" id="D10720">
    <property type="protein sequence ID" value="BAA01563.1"/>
    <property type="molecule type" value="mRNA"/>
</dbReference>
<dbReference type="EMBL" id="D10722">
    <property type="protein sequence ID" value="BAA01565.1"/>
    <property type="molecule type" value="Genomic_DNA"/>
</dbReference>
<dbReference type="EMBL" id="D10724">
    <property type="protein sequence ID" value="BAA01567.1"/>
    <property type="molecule type" value="Genomic_DNA"/>
</dbReference>
<dbReference type="EMBL" id="AB072174">
    <property type="protein sequence ID" value="BAB68547.1"/>
    <property type="molecule type" value="mRNA"/>
</dbReference>
<dbReference type="EMBL" id="AB072175">
    <property type="protein sequence ID" value="BAB68548.1"/>
    <property type="molecule type" value="mRNA"/>
</dbReference>
<dbReference type="PIR" id="A46169">
    <property type="entry name" value="A46169"/>
</dbReference>
<dbReference type="PIR" id="A48188">
    <property type="entry name" value="A48188"/>
</dbReference>
<dbReference type="PIR" id="B48188">
    <property type="entry name" value="PSTVIF"/>
</dbReference>
<dbReference type="SMR" id="P06859"/>
<dbReference type="GO" id="GO:0005576">
    <property type="term" value="C:extracellular region"/>
    <property type="evidence" value="ECO:0007669"/>
    <property type="project" value="UniProtKB-SubCell"/>
</dbReference>
<dbReference type="GO" id="GO:0005509">
    <property type="term" value="F:calcium ion binding"/>
    <property type="evidence" value="ECO:0007669"/>
    <property type="project" value="InterPro"/>
</dbReference>
<dbReference type="GO" id="GO:0047498">
    <property type="term" value="F:calcium-dependent phospholipase A2 activity"/>
    <property type="evidence" value="ECO:0007669"/>
    <property type="project" value="TreeGrafter"/>
</dbReference>
<dbReference type="GO" id="GO:0005543">
    <property type="term" value="F:phospholipid binding"/>
    <property type="evidence" value="ECO:0007669"/>
    <property type="project" value="TreeGrafter"/>
</dbReference>
<dbReference type="GO" id="GO:0090729">
    <property type="term" value="F:toxin activity"/>
    <property type="evidence" value="ECO:0007669"/>
    <property type="project" value="UniProtKB-KW"/>
</dbReference>
<dbReference type="GO" id="GO:0050482">
    <property type="term" value="P:arachidonate secretion"/>
    <property type="evidence" value="ECO:0007669"/>
    <property type="project" value="InterPro"/>
</dbReference>
<dbReference type="GO" id="GO:0016042">
    <property type="term" value="P:lipid catabolic process"/>
    <property type="evidence" value="ECO:0007669"/>
    <property type="project" value="UniProtKB-KW"/>
</dbReference>
<dbReference type="GO" id="GO:0042130">
    <property type="term" value="P:negative regulation of T cell proliferation"/>
    <property type="evidence" value="ECO:0007669"/>
    <property type="project" value="TreeGrafter"/>
</dbReference>
<dbReference type="GO" id="GO:0006644">
    <property type="term" value="P:phospholipid metabolic process"/>
    <property type="evidence" value="ECO:0007669"/>
    <property type="project" value="InterPro"/>
</dbReference>
<dbReference type="CDD" id="cd00125">
    <property type="entry name" value="PLA2c"/>
    <property type="match status" value="1"/>
</dbReference>
<dbReference type="FunFam" id="1.20.90.10:FF:000001">
    <property type="entry name" value="Basic phospholipase A2 homolog"/>
    <property type="match status" value="1"/>
</dbReference>
<dbReference type="Gene3D" id="1.20.90.10">
    <property type="entry name" value="Phospholipase A2 domain"/>
    <property type="match status" value="1"/>
</dbReference>
<dbReference type="InterPro" id="IPR001211">
    <property type="entry name" value="PLipase_A2"/>
</dbReference>
<dbReference type="InterPro" id="IPR033112">
    <property type="entry name" value="PLipase_A2_Asp_AS"/>
</dbReference>
<dbReference type="InterPro" id="IPR016090">
    <property type="entry name" value="PLipase_A2_dom"/>
</dbReference>
<dbReference type="InterPro" id="IPR036444">
    <property type="entry name" value="PLipase_A2_dom_sf"/>
</dbReference>
<dbReference type="InterPro" id="IPR033113">
    <property type="entry name" value="PLipase_A2_His_AS"/>
</dbReference>
<dbReference type="PANTHER" id="PTHR11716">
    <property type="entry name" value="PHOSPHOLIPASE A2 FAMILY MEMBER"/>
    <property type="match status" value="1"/>
</dbReference>
<dbReference type="PANTHER" id="PTHR11716:SF9">
    <property type="entry name" value="PHOSPHOLIPASE A2, MEMBRANE ASSOCIATED"/>
    <property type="match status" value="1"/>
</dbReference>
<dbReference type="Pfam" id="PF00068">
    <property type="entry name" value="Phospholip_A2_1"/>
    <property type="match status" value="1"/>
</dbReference>
<dbReference type="PRINTS" id="PR00389">
    <property type="entry name" value="PHPHLIPASEA2"/>
</dbReference>
<dbReference type="SMART" id="SM00085">
    <property type="entry name" value="PA2c"/>
    <property type="match status" value="1"/>
</dbReference>
<dbReference type="SUPFAM" id="SSF48619">
    <property type="entry name" value="Phospholipase A2, PLA2"/>
    <property type="match status" value="1"/>
</dbReference>
<dbReference type="PROSITE" id="PS00119">
    <property type="entry name" value="PA2_ASP"/>
    <property type="match status" value="1"/>
</dbReference>
<dbReference type="PROSITE" id="PS00118">
    <property type="entry name" value="PA2_HIS"/>
    <property type="match status" value="1"/>
</dbReference>
<name>PA2A1_PROFL</name>
<comment type="function">
    <text evidence="6">Snake venom phospholipase A2 (PLA2) that is highly lipolytic and myolytic. PLA2 catalyzes the calcium-dependent hydrolysis of the 2-acyl groups in 3-sn-phosphoglycerides.</text>
</comment>
<comment type="catalytic activity">
    <reaction evidence="3 4">
        <text>a 1,2-diacyl-sn-glycero-3-phosphocholine + H2O = a 1-acyl-sn-glycero-3-phosphocholine + a fatty acid + H(+)</text>
        <dbReference type="Rhea" id="RHEA:15801"/>
        <dbReference type="ChEBI" id="CHEBI:15377"/>
        <dbReference type="ChEBI" id="CHEBI:15378"/>
        <dbReference type="ChEBI" id="CHEBI:28868"/>
        <dbReference type="ChEBI" id="CHEBI:57643"/>
        <dbReference type="ChEBI" id="CHEBI:58168"/>
        <dbReference type="EC" id="3.1.1.4"/>
    </reaction>
</comment>
<comment type="cofactor">
    <cofactor evidence="1">
        <name>Ca(2+)</name>
        <dbReference type="ChEBI" id="CHEBI:29108"/>
    </cofactor>
    <text evidence="1">Binds 1 Ca(2+) ion per subunit.</text>
</comment>
<comment type="subunit">
    <text>Homodimer.</text>
</comment>
<comment type="subcellular location">
    <subcellularLocation>
        <location>Secreted</location>
    </subcellularLocation>
</comment>
<comment type="tissue specificity">
    <text>Expressed by the venom gland.</text>
</comment>
<comment type="similarity">
    <text evidence="10">Belongs to the phospholipase A2 family. Group II subfamily. D49 sub-subfamily.</text>
</comment>
<accession>P06859</accession>
<accession>Q92118</accession>
<keyword id="KW-0106">Calcium</keyword>
<keyword id="KW-0903">Direct protein sequencing</keyword>
<keyword id="KW-1015">Disulfide bond</keyword>
<keyword id="KW-0378">Hydrolase</keyword>
<keyword id="KW-0442">Lipid degradation</keyword>
<keyword id="KW-0443">Lipid metabolism</keyword>
<keyword id="KW-0479">Metal-binding</keyword>
<keyword id="KW-0959">Myotoxin</keyword>
<keyword id="KW-0964">Secreted</keyword>
<keyword id="KW-0732">Signal</keyword>
<keyword id="KW-0800">Toxin</keyword>
<feature type="signal peptide" evidence="5 8 9">
    <location>
        <begin position="1"/>
        <end position="16"/>
    </location>
</feature>
<feature type="chain" id="PRO_0000022952" description="Acidic phospholipase A2 1" evidence="8">
    <location>
        <begin position="17"/>
        <end position="138"/>
    </location>
</feature>
<feature type="active site" evidence="7">
    <location>
        <position position="63"/>
    </location>
</feature>
<feature type="active site" evidence="7">
    <location>
        <position position="104"/>
    </location>
</feature>
<feature type="binding site" evidence="2">
    <location>
        <position position="43"/>
    </location>
    <ligand>
        <name>Ca(2+)</name>
        <dbReference type="ChEBI" id="CHEBI:29108"/>
    </ligand>
</feature>
<feature type="binding site" evidence="2">
    <location>
        <position position="45"/>
    </location>
    <ligand>
        <name>Ca(2+)</name>
        <dbReference type="ChEBI" id="CHEBI:29108"/>
    </ligand>
</feature>
<feature type="binding site" evidence="2">
    <location>
        <position position="47"/>
    </location>
    <ligand>
        <name>Ca(2+)</name>
        <dbReference type="ChEBI" id="CHEBI:29108"/>
    </ligand>
</feature>
<feature type="binding site" evidence="2">
    <location>
        <position position="64"/>
    </location>
    <ligand>
        <name>Ca(2+)</name>
        <dbReference type="ChEBI" id="CHEBI:29108"/>
    </ligand>
</feature>
<feature type="disulfide bond" evidence="2">
    <location>
        <begin position="42"/>
        <end position="131"/>
    </location>
</feature>
<feature type="disulfide bond" evidence="2">
    <location>
        <begin position="44"/>
        <end position="60"/>
    </location>
</feature>
<feature type="disulfide bond" evidence="2">
    <location>
        <begin position="59"/>
        <end position="110"/>
    </location>
</feature>
<feature type="disulfide bond" evidence="2">
    <location>
        <begin position="65"/>
        <end position="138"/>
    </location>
</feature>
<feature type="disulfide bond" evidence="2">
    <location>
        <begin position="66"/>
        <end position="103"/>
    </location>
</feature>
<feature type="disulfide bond" evidence="2">
    <location>
        <begin position="73"/>
        <end position="97"/>
    </location>
</feature>
<feature type="disulfide bond" evidence="2">
    <location>
        <begin position="91"/>
        <end position="101"/>
    </location>
</feature>
<feature type="sequence variant">
    <original>D</original>
    <variation>E</variation>
    <location>
        <position position="15"/>
    </location>
</feature>
<feature type="sequence variant" description="In isozyme [Thr37]PLA2.">
    <original>K</original>
    <variation>T</variation>
    <location>
        <position position="53"/>
    </location>
</feature>
<feature type="sequence conflict" description="In Ref. 6; AA sequence." evidence="10" ref="6">
    <original>NNGD</original>
    <variation>QGN</variation>
    <location>
        <begin position="85"/>
        <end position="88"/>
    </location>
</feature>
<feature type="sequence conflict" description="In Ref. 6; AA sequence." evidence="10" ref="6">
    <original>E</original>
    <variation>G</variation>
    <location>
        <position position="92"/>
    </location>
</feature>
<feature type="sequence conflict" description="In Ref. 6; AA sequence." evidence="10" ref="6">
    <original>GPC</original>
    <variation>DPCD</variation>
    <location>
        <begin position="95"/>
        <end position="97"/>
    </location>
</feature>
<evidence type="ECO:0000250" key="1"/>
<evidence type="ECO:0000250" key="2">
    <source>
        <dbReference type="UniProtKB" id="O42191"/>
    </source>
</evidence>
<evidence type="ECO:0000255" key="3">
    <source>
        <dbReference type="PROSITE-ProRule" id="PRU10035"/>
    </source>
</evidence>
<evidence type="ECO:0000255" key="4">
    <source>
        <dbReference type="PROSITE-ProRule" id="PRU10036"/>
    </source>
</evidence>
<evidence type="ECO:0000269" key="5">
    <source>
    </source>
</evidence>
<evidence type="ECO:0000269" key="6">
    <source>
    </source>
</evidence>
<evidence type="ECO:0000269" key="7">
    <source>
    </source>
</evidence>
<evidence type="ECO:0000269" key="8">
    <source>
    </source>
</evidence>
<evidence type="ECO:0000269" key="9">
    <source>
    </source>
</evidence>
<evidence type="ECO:0000305" key="10"/>
<sequence length="138" mass="15535">MRTLWIMAVLLVGVDGGLWQFENMIIKVVKKSGILSYSAYGCYCGWGGRGKPKDATDRCCFVHDCCYGKVTGCNPKLGKYTYSWNNGDIVCEGDGPCKEVCECDRAAAICFRDNLDTYDRNKYWRYPASNCQEDSEPC</sequence>
<organism>
    <name type="scientific">Protobothrops flavoviridis</name>
    <name type="common">Habu</name>
    <name type="synonym">Trimeresurus flavoviridis</name>
    <dbReference type="NCBI Taxonomy" id="88087"/>
    <lineage>
        <taxon>Eukaryota</taxon>
        <taxon>Metazoa</taxon>
        <taxon>Chordata</taxon>
        <taxon>Craniata</taxon>
        <taxon>Vertebrata</taxon>
        <taxon>Euteleostomi</taxon>
        <taxon>Lepidosauria</taxon>
        <taxon>Squamata</taxon>
        <taxon>Bifurcata</taxon>
        <taxon>Unidentata</taxon>
        <taxon>Episquamata</taxon>
        <taxon>Toxicofera</taxon>
        <taxon>Serpentes</taxon>
        <taxon>Colubroidea</taxon>
        <taxon>Viperidae</taxon>
        <taxon>Crotalinae</taxon>
        <taxon>Protobothrops</taxon>
    </lineage>
</organism>
<proteinExistence type="evidence at protein level"/>
<reference key="1">
    <citation type="journal article" date="1990" name="J. Biochem.">
        <title>Cloning and sequence analysis of cDNA for Trimeresurus flavoviridis phospholipase A2, and consequent revision of the amino acid sequence.</title>
        <authorList>
            <person name="Oda N."/>
            <person name="Ogawa T."/>
            <person name="Ohno M."/>
            <person name="Sasaki H."/>
            <person name="Sakaki Y."/>
            <person name="Kihara H."/>
        </authorList>
    </citation>
    <scope>NUCLEOTIDE SEQUENCE [MRNA]</scope>
    <source>
        <tissue>Venom gland</tissue>
    </source>
</reference>
<reference key="2">
    <citation type="journal article" date="1992" name="Proc. Natl. Acad. Sci. U.S.A.">
        <title>Unusually high conservation of untranslated sequences in cDNAs for Trimeresurus flavoviridis phospholipase A2 isozymes.</title>
        <authorList>
            <person name="Ogawa T."/>
            <person name="Oda N."/>
            <person name="Nakashima K."/>
            <person name="Sasaki H."/>
            <person name="Hattori M."/>
            <person name="Sakaki Y."/>
            <person name="Kihara H."/>
            <person name="Ohno M."/>
        </authorList>
    </citation>
    <scope>NUCLEOTIDE SEQUENCE [MRNA] (ISOZYME [THR37]PLA2)</scope>
    <source>
        <strain>Tokunoshima</strain>
        <tissue>Venom gland</tissue>
    </source>
</reference>
<reference key="3">
    <citation type="journal article" date="1993" name="Proc. Natl. Acad. Sci. U.S.A.">
        <title>Accelerated evolution of Trimeresurus flavoviridis venom gland phospholipase A2 isozymes.</title>
        <authorList>
            <person name="Nakashima K."/>
            <person name="Ogawa T."/>
            <person name="Oda N."/>
            <person name="Hattori M."/>
            <person name="Sakaki Y."/>
            <person name="Kihara H."/>
            <person name="Ohno M."/>
        </authorList>
    </citation>
    <scope>NUCLEOTIDE SEQUENCE [GENOMIC DNA]</scope>
    <source>
        <strain>Tokunoshima</strain>
        <tissue>Liver</tissue>
    </source>
</reference>
<reference key="4">
    <citation type="journal article" date="1994" name="Biosci. Biotechnol. Biochem.">
        <title>Polymorphisms of Trimeresurus flavoviridis venom gland phospholipase A2 isozyme genes.</title>
        <authorList>
            <person name="Nakashima K."/>
            <person name="Nobuhisa I."/>
            <person name="Ogawa T."/>
            <person name="Hattori M."/>
            <person name="Sakaki Y."/>
            <person name="Kihara H."/>
            <person name="Ohno M."/>
        </authorList>
    </citation>
    <scope>NUCLEOTIDE SEQUENCE [GENOMIC DNA]</scope>
    <source>
        <tissue>Liver</tissue>
    </source>
</reference>
<reference key="5">
    <citation type="journal article" date="2003" name="J. Mol. Evol.">
        <title>Interisland evolution of Trimeresurus flavoviridis venom phospholipase A(2) isozymes.</title>
        <authorList>
            <person name="Chijiwa T."/>
            <person name="Yamaguchi Y."/>
            <person name="Ogawa T."/>
            <person name="Deshimaru M."/>
            <person name="Nobuhisa I."/>
            <person name="Nakashima K."/>
            <person name="Oda-Ueda N."/>
            <person name="Fukumaki Y."/>
            <person name="Hattori S."/>
            <person name="Ohno M."/>
        </authorList>
    </citation>
    <scope>NUCLEOTIDE SEQUENCE [MRNA]</scope>
    <scope>PROTEIN SEQUENCE OF 17-36</scope>
    <source>
        <strain>Amami-Oshima</strain>
        <strain>Okinawa</strain>
        <tissue>Venom</tissue>
        <tissue>Venom gland</tissue>
    </source>
</reference>
<reference key="6">
    <citation type="journal article" date="1986" name="J. Biochem.">
        <title>Amino acid sequence of Trimeresurus flavoviridis phospholipase A2.</title>
        <authorList>
            <person name="Tanaka S."/>
            <person name="Mohri N."/>
            <person name="Kihara H."/>
            <person name="Ohno M."/>
        </authorList>
    </citation>
    <scope>PROTEIN SEQUENCE OF 17-138</scope>
    <source>
        <tissue>Venom</tissue>
    </source>
</reference>
<reference key="7">
    <citation type="journal article" date="1986" name="Toxicon">
        <title>Comparison of amino terminal region of three isoenzymes of phospholipases A2 (TFV PL-Ia, TFV PL-Ib, TFV PL-X) from Trimeresurus flavoviridis (habu snake) venom and the complete amino acid sequence of the basic phospholipase, TFV PL-X.</title>
        <authorList>
            <person name="Kini R.M."/>
            <person name="Kawabata S."/>
            <person name="Iwanaga S."/>
        </authorList>
    </citation>
    <scope>PROTEIN SEQUENCE OF 17-47</scope>
    <source>
        <tissue>Venom</tissue>
    </source>
</reference>
<reference key="8">
    <citation type="journal article" date="1992" name="Biochem. Int.">
        <title>Myotoxicity and physiological effects of three Trimeresurus flavoviridis phospholipases A2.</title>
        <authorList>
            <person name="Kihara H."/>
            <person name="Uchikawa R."/>
            <person name="Hattori S."/>
            <person name="Ohno M."/>
        </authorList>
    </citation>
    <scope>FUNCTION</scope>
</reference>
<reference key="9">
    <citation type="journal article" date="1989" name="J. Biochem.">
        <title>Investigation of an active site histidine-aspartate couple in Trimeresurus flavoviridis phospholipase A2.</title>
        <authorList>
            <person name="Kohzuma T."/>
            <person name="Oda N."/>
            <person name="Kihara H."/>
            <person name="Ohno M."/>
        </authorList>
    </citation>
    <scope>ACTIVE SITES</scope>
</reference>